<comment type="function">
    <text evidence="1">Activates ribosomal RNA transcription. Plays a direct role in upstream activation of rRNA promoters.</text>
</comment>
<comment type="subunit">
    <text evidence="1">Homodimer.</text>
</comment>
<comment type="similarity">
    <text evidence="1">Belongs to the transcriptional regulatory Fis family.</text>
</comment>
<feature type="chain" id="PRO_1000023328" description="DNA-binding protein Fis">
    <location>
        <begin position="1"/>
        <end position="99"/>
    </location>
</feature>
<feature type="DNA-binding region" description="H-T-H motif" evidence="1">
    <location>
        <begin position="75"/>
        <end position="94"/>
    </location>
</feature>
<reference key="1">
    <citation type="journal article" date="2007" name="Genome Biol.">
        <title>Characterization and modeling of the Haemophilus influenzae core and supragenomes based on the complete genomic sequences of Rd and 12 clinical nontypeable strains.</title>
        <authorList>
            <person name="Hogg J.S."/>
            <person name="Hu F.Z."/>
            <person name="Janto B."/>
            <person name="Boissy R."/>
            <person name="Hayes J."/>
            <person name="Keefe R."/>
            <person name="Post J.C."/>
            <person name="Ehrlich G.D."/>
        </authorList>
    </citation>
    <scope>NUCLEOTIDE SEQUENCE [LARGE SCALE GENOMIC DNA]</scope>
    <source>
        <strain>PittEE</strain>
    </source>
</reference>
<protein>
    <recommendedName>
        <fullName evidence="1">DNA-binding protein Fis</fullName>
    </recommendedName>
</protein>
<accession>A5UD91</accession>
<evidence type="ECO:0000255" key="1">
    <source>
        <dbReference type="HAMAP-Rule" id="MF_00166"/>
    </source>
</evidence>
<organism>
    <name type="scientific">Haemophilus influenzae (strain PittEE)</name>
    <dbReference type="NCBI Taxonomy" id="374930"/>
    <lineage>
        <taxon>Bacteria</taxon>
        <taxon>Pseudomonadati</taxon>
        <taxon>Pseudomonadota</taxon>
        <taxon>Gammaproteobacteria</taxon>
        <taxon>Pasteurellales</taxon>
        <taxon>Pasteurellaceae</taxon>
        <taxon>Haemophilus</taxon>
    </lineage>
</organism>
<gene>
    <name evidence="1" type="primary">fis</name>
    <name type="ordered locus">CGSHiEE_07065</name>
</gene>
<sequence>MLEQQRNSADALTVSVLNAQSQVTSKPLRDSVKQALRNYLAQLDGQDVNDLYELVLAEVEHPMLDMIMQYTRGNQTRAANMLGINRGTLRKKLKKYGMG</sequence>
<dbReference type="EMBL" id="CP000671">
    <property type="protein sequence ID" value="ABQ98742.1"/>
    <property type="molecule type" value="Genomic_DNA"/>
</dbReference>
<dbReference type="SMR" id="A5UD91"/>
<dbReference type="KEGG" id="hip:CGSHiEE_07065"/>
<dbReference type="HOGENOM" id="CLU_158040_3_0_6"/>
<dbReference type="GO" id="GO:0003700">
    <property type="term" value="F:DNA-binding transcription factor activity"/>
    <property type="evidence" value="ECO:0007669"/>
    <property type="project" value="UniProtKB-UniRule"/>
</dbReference>
<dbReference type="GO" id="GO:0043565">
    <property type="term" value="F:sequence-specific DNA binding"/>
    <property type="evidence" value="ECO:0007669"/>
    <property type="project" value="InterPro"/>
</dbReference>
<dbReference type="FunFam" id="1.10.10.60:FF:000006">
    <property type="entry name" value="DNA-binding protein Fis"/>
    <property type="match status" value="1"/>
</dbReference>
<dbReference type="Gene3D" id="1.10.10.60">
    <property type="entry name" value="Homeodomain-like"/>
    <property type="match status" value="1"/>
</dbReference>
<dbReference type="HAMAP" id="MF_00166">
    <property type="entry name" value="DNA_binding_Fis"/>
    <property type="match status" value="1"/>
</dbReference>
<dbReference type="InterPro" id="IPR005412">
    <property type="entry name" value="Fis_DNA-bd"/>
</dbReference>
<dbReference type="InterPro" id="IPR009057">
    <property type="entry name" value="Homeodomain-like_sf"/>
</dbReference>
<dbReference type="InterPro" id="IPR002197">
    <property type="entry name" value="HTH_Fis"/>
</dbReference>
<dbReference type="InterPro" id="IPR050207">
    <property type="entry name" value="Trans_regulatory_Fis"/>
</dbReference>
<dbReference type="NCBIfam" id="NF001659">
    <property type="entry name" value="PRK00430.1"/>
    <property type="match status" value="1"/>
</dbReference>
<dbReference type="PANTHER" id="PTHR47918">
    <property type="entry name" value="DNA-BINDING PROTEIN FIS"/>
    <property type="match status" value="1"/>
</dbReference>
<dbReference type="PANTHER" id="PTHR47918:SF1">
    <property type="entry name" value="DNA-BINDING PROTEIN FIS"/>
    <property type="match status" value="1"/>
</dbReference>
<dbReference type="Pfam" id="PF02954">
    <property type="entry name" value="HTH_8"/>
    <property type="match status" value="1"/>
</dbReference>
<dbReference type="PIRSF" id="PIRSF002097">
    <property type="entry name" value="DNA-binding_Fis"/>
    <property type="match status" value="1"/>
</dbReference>
<dbReference type="PRINTS" id="PR01591">
    <property type="entry name" value="DNABINDNGFIS"/>
</dbReference>
<dbReference type="PRINTS" id="PR01590">
    <property type="entry name" value="HTHFIS"/>
</dbReference>
<dbReference type="SUPFAM" id="SSF46689">
    <property type="entry name" value="Homeodomain-like"/>
    <property type="match status" value="1"/>
</dbReference>
<keyword id="KW-0010">Activator</keyword>
<keyword id="KW-0238">DNA-binding</keyword>
<keyword id="KW-0804">Transcription</keyword>
<keyword id="KW-0805">Transcription regulation</keyword>
<name>FIS_HAEIE</name>
<proteinExistence type="inferred from homology"/>